<sequence length="566" mass="63305">MNMSDLGWDDEDKSVVSAVLGHLASDFLRANSNSNQNLFLVMGTDDTLNKKLSSLVDWPNSENFSWNYAIFWQQTMSRSGQQVLGWGDGCCREPNEEEESKVVRSYNFNNMGAEEETWQDMRKRVLQKLHRLFGGSDEDNYALSLEKVTATEIFFLASMYFFFNHGEGGPGRCYSSGKHVWLSDAVNSESDYCFRSFMAKSAGIRTIVMVPTDAGVLELGSVWSLPENIGLVKSVQALFMRRVTQPVMVTSNTNMTGGIHKLFGQDLSGAHAYPKKLEVRRNLDERFTPQSWEGYNNNKGPTFGYTPQRDDVKVLENVNMVVDNNNYKTQIEFAGSSVAASSNPSTNTQQEKSESCTEKRPVSLLAGAGIVSVVDEKRPRKRGRKPANGREEPLNHVEAERQRREKLNQRFYALRSVVPNISKMDKASLLGDAISYIKELQEKVKIMEDERVGTDKSLSESNTITVEESPEVDIQAMNEEVVVRVISPLDSHPASRIIQAMRNSNVSLMEAKLSLAEDTMFHTFVIKSNNGSDPLTKEKLIAAFYPETSSTQPPLPSSSSQVSGDI</sequence>
<gene>
    <name type="primary">AIB</name>
    <name type="synonym">BHLH17</name>
    <name type="synonym">EN35</name>
    <name type="ordered locus">At2g46510</name>
    <name type="ORF">F13A10.4</name>
</gene>
<keyword id="KW-0938">Abscisic acid signaling pathway</keyword>
<keyword id="KW-0010">Activator</keyword>
<keyword id="KW-0238">DNA-binding</keyword>
<keyword id="KW-0539">Nucleus</keyword>
<keyword id="KW-1185">Reference proteome</keyword>
<keyword id="KW-0804">Transcription</keyword>
<keyword id="KW-0805">Transcription regulation</keyword>
<proteinExistence type="evidence at transcript level"/>
<protein>
    <recommendedName>
        <fullName>Transcription factor ABA-INDUCIBLE bHLH-TYPE</fullName>
        <shortName>AtAIB</shortName>
    </recommendedName>
    <alternativeName>
        <fullName>Basic helix-loop-helix protein 17</fullName>
        <shortName>AtbHLH17</shortName>
        <shortName>bHLH 17</shortName>
    </alternativeName>
    <alternativeName>
        <fullName>Transcription factor EN 35</fullName>
    </alternativeName>
    <alternativeName>
        <fullName>bHLH transcription factor bHLH017</fullName>
    </alternativeName>
</protein>
<feature type="chain" id="PRO_0000358722" description="Transcription factor ABA-INDUCIBLE bHLH-TYPE">
    <location>
        <begin position="1"/>
        <end position="566"/>
    </location>
</feature>
<feature type="domain" description="bHLH" evidence="1">
    <location>
        <begin position="391"/>
        <end position="440"/>
    </location>
</feature>
<feature type="region of interest" description="Disordered" evidence="2">
    <location>
        <begin position="337"/>
        <end position="360"/>
    </location>
</feature>
<feature type="region of interest" description="Disordered" evidence="2">
    <location>
        <begin position="375"/>
        <end position="402"/>
    </location>
</feature>
<feature type="region of interest" description="Disordered" evidence="2">
    <location>
        <begin position="546"/>
        <end position="566"/>
    </location>
</feature>
<feature type="compositionally biased region" description="Polar residues" evidence="2">
    <location>
        <begin position="338"/>
        <end position="350"/>
    </location>
</feature>
<feature type="compositionally biased region" description="Basic and acidic residues" evidence="2">
    <location>
        <begin position="351"/>
        <end position="360"/>
    </location>
</feature>
<feature type="compositionally biased region" description="Basic and acidic residues" evidence="2">
    <location>
        <begin position="388"/>
        <end position="402"/>
    </location>
</feature>
<feature type="sequence conflict" description="In Ref. 3; AAM19778." evidence="4" ref="3">
    <original>A</original>
    <variation>V</variation>
    <location>
        <position position="399"/>
    </location>
</feature>
<name>AIB_ARATH</name>
<accession>Q9ZPY8</accession>
<accession>Q8LPT0</accession>
<comment type="function">
    <text evidence="3">Transcription activator. Positively regulates abscisic acid (ABA) response. Confers drought tolerance and sensitivity to ABA.</text>
</comment>
<comment type="subunit">
    <text evidence="4">Homodimer.</text>
</comment>
<comment type="subcellular location">
    <subcellularLocation>
        <location evidence="1 3">Nucleus</location>
    </subcellularLocation>
</comment>
<comment type="tissue specificity">
    <text evidence="3">In seedlings, mainly expressed in root tips, cotyledons, hypocotyls, and leaves, as well as its guard cells. In adult plant, detectable in stems, flowers, and siliques.</text>
</comment>
<comment type="induction">
    <text evidence="3">Transiently by ABA and polyethylene glycol (PEG).</text>
</comment>
<organism>
    <name type="scientific">Arabidopsis thaliana</name>
    <name type="common">Mouse-ear cress</name>
    <dbReference type="NCBI Taxonomy" id="3702"/>
    <lineage>
        <taxon>Eukaryota</taxon>
        <taxon>Viridiplantae</taxon>
        <taxon>Streptophyta</taxon>
        <taxon>Embryophyta</taxon>
        <taxon>Tracheophyta</taxon>
        <taxon>Spermatophyta</taxon>
        <taxon>Magnoliopsida</taxon>
        <taxon>eudicotyledons</taxon>
        <taxon>Gunneridae</taxon>
        <taxon>Pentapetalae</taxon>
        <taxon>rosids</taxon>
        <taxon>malvids</taxon>
        <taxon>Brassicales</taxon>
        <taxon>Brassicaceae</taxon>
        <taxon>Camelineae</taxon>
        <taxon>Arabidopsis</taxon>
    </lineage>
</organism>
<reference key="1">
    <citation type="journal article" date="1999" name="Nature">
        <title>Sequence and analysis of chromosome 2 of the plant Arabidopsis thaliana.</title>
        <authorList>
            <person name="Lin X."/>
            <person name="Kaul S."/>
            <person name="Rounsley S.D."/>
            <person name="Shea T.P."/>
            <person name="Benito M.-I."/>
            <person name="Town C.D."/>
            <person name="Fujii C.Y."/>
            <person name="Mason T.M."/>
            <person name="Bowman C.L."/>
            <person name="Barnstead M.E."/>
            <person name="Feldblyum T.V."/>
            <person name="Buell C.R."/>
            <person name="Ketchum K.A."/>
            <person name="Lee J.J."/>
            <person name="Ronning C.M."/>
            <person name="Koo H.L."/>
            <person name="Moffat K.S."/>
            <person name="Cronin L.A."/>
            <person name="Shen M."/>
            <person name="Pai G."/>
            <person name="Van Aken S."/>
            <person name="Umayam L."/>
            <person name="Tallon L.J."/>
            <person name="Gill J.E."/>
            <person name="Adams M.D."/>
            <person name="Carrera A.J."/>
            <person name="Creasy T.H."/>
            <person name="Goodman H.M."/>
            <person name="Somerville C.R."/>
            <person name="Copenhaver G.P."/>
            <person name="Preuss D."/>
            <person name="Nierman W.C."/>
            <person name="White O."/>
            <person name="Eisen J.A."/>
            <person name="Salzberg S.L."/>
            <person name="Fraser C.M."/>
            <person name="Venter J.C."/>
        </authorList>
    </citation>
    <scope>NUCLEOTIDE SEQUENCE [LARGE SCALE GENOMIC DNA]</scope>
    <source>
        <strain>cv. Columbia</strain>
    </source>
</reference>
<reference key="2">
    <citation type="journal article" date="2017" name="Plant J.">
        <title>Araport11: a complete reannotation of the Arabidopsis thaliana reference genome.</title>
        <authorList>
            <person name="Cheng C.Y."/>
            <person name="Krishnakumar V."/>
            <person name="Chan A.P."/>
            <person name="Thibaud-Nissen F."/>
            <person name="Schobel S."/>
            <person name="Town C.D."/>
        </authorList>
    </citation>
    <scope>GENOME REANNOTATION</scope>
    <source>
        <strain>cv. Columbia</strain>
    </source>
</reference>
<reference key="3">
    <citation type="journal article" date="2003" name="Science">
        <title>Empirical analysis of transcriptional activity in the Arabidopsis genome.</title>
        <authorList>
            <person name="Yamada K."/>
            <person name="Lim J."/>
            <person name="Dale J.M."/>
            <person name="Chen H."/>
            <person name="Shinn P."/>
            <person name="Palm C.J."/>
            <person name="Southwick A.M."/>
            <person name="Wu H.C."/>
            <person name="Kim C.J."/>
            <person name="Nguyen M."/>
            <person name="Pham P.K."/>
            <person name="Cheuk R.F."/>
            <person name="Karlin-Newmann G."/>
            <person name="Liu S.X."/>
            <person name="Lam B."/>
            <person name="Sakano H."/>
            <person name="Wu T."/>
            <person name="Yu G."/>
            <person name="Miranda M."/>
            <person name="Quach H.L."/>
            <person name="Tripp M."/>
            <person name="Chang C.H."/>
            <person name="Lee J.M."/>
            <person name="Toriumi M.J."/>
            <person name="Chan M.M."/>
            <person name="Tang C.C."/>
            <person name="Onodera C.S."/>
            <person name="Deng J.M."/>
            <person name="Akiyama K."/>
            <person name="Ansari Y."/>
            <person name="Arakawa T."/>
            <person name="Banh J."/>
            <person name="Banno F."/>
            <person name="Bowser L."/>
            <person name="Brooks S.Y."/>
            <person name="Carninci P."/>
            <person name="Chao Q."/>
            <person name="Choy N."/>
            <person name="Enju A."/>
            <person name="Goldsmith A.D."/>
            <person name="Gurjal M."/>
            <person name="Hansen N.F."/>
            <person name="Hayashizaki Y."/>
            <person name="Johnson-Hopson C."/>
            <person name="Hsuan V.W."/>
            <person name="Iida K."/>
            <person name="Karnes M."/>
            <person name="Khan S."/>
            <person name="Koesema E."/>
            <person name="Ishida J."/>
            <person name="Jiang P.X."/>
            <person name="Jones T."/>
            <person name="Kawai J."/>
            <person name="Kamiya A."/>
            <person name="Meyers C."/>
            <person name="Nakajima M."/>
            <person name="Narusaka M."/>
            <person name="Seki M."/>
            <person name="Sakurai T."/>
            <person name="Satou M."/>
            <person name="Tamse R."/>
            <person name="Vaysberg M."/>
            <person name="Wallender E.K."/>
            <person name="Wong C."/>
            <person name="Yamamura Y."/>
            <person name="Yuan S."/>
            <person name="Shinozaki K."/>
            <person name="Davis R.W."/>
            <person name="Theologis A."/>
            <person name="Ecker J.R."/>
        </authorList>
    </citation>
    <scope>NUCLEOTIDE SEQUENCE [LARGE SCALE MRNA]</scope>
    <source>
        <strain>cv. Columbia</strain>
    </source>
</reference>
<reference key="4">
    <citation type="journal article" date="2003" name="Mol. Biol. Evol.">
        <title>The basic helix-loop-helix transcription factor family in plants: a genome-wide study of protein structure and functional diversity.</title>
        <authorList>
            <person name="Heim M.A."/>
            <person name="Jakoby M."/>
            <person name="Werber M."/>
            <person name="Martin C."/>
            <person name="Weisshaar B."/>
            <person name="Bailey P.C."/>
        </authorList>
    </citation>
    <scope>GENE FAMILY</scope>
    <scope>NOMENCLATURE</scope>
</reference>
<reference key="5">
    <citation type="journal article" date="2003" name="Plant Cell">
        <title>The Arabidopsis basic/helix-loop-helix transcription factor family.</title>
        <authorList>
            <person name="Toledo-Ortiz G."/>
            <person name="Huq E."/>
            <person name="Quail P.H."/>
        </authorList>
    </citation>
    <scope>GENE FAMILY</scope>
</reference>
<reference key="6">
    <citation type="journal article" date="2003" name="Plant Cell">
        <title>Update on the basic helix-loop-helix transcription factor gene family in Arabidopsis thaliana.</title>
        <authorList>
            <person name="Bailey P.C."/>
            <person name="Martin C."/>
            <person name="Toledo-Ortiz G."/>
            <person name="Quail P.H."/>
            <person name="Huq E."/>
            <person name="Heim M.A."/>
            <person name="Jakoby M."/>
            <person name="Werber M."/>
            <person name="Weisshaar B."/>
        </authorList>
    </citation>
    <scope>GENE FAMILY</scope>
    <scope>NOMENCLATURE</scope>
</reference>
<reference key="7">
    <citation type="journal article" date="2007" name="Plant Mol. Biol.">
        <title>The bHLH-type transcription factor AtAIB positively regulates ABA response in Arabidopsis.</title>
        <authorList>
            <person name="Li H."/>
            <person name="Sun J."/>
            <person name="Xu Y."/>
            <person name="Jiang H."/>
            <person name="Wu X."/>
            <person name="Li C."/>
        </authorList>
    </citation>
    <scope>FUNCTION</scope>
    <scope>SUBCELLULAR LOCATION</scope>
    <scope>TISSUE SPECIFICITY</scope>
    <scope>INDUCTION</scope>
</reference>
<dbReference type="EMBL" id="AC006418">
    <property type="protein sequence ID" value="AAD20162.2"/>
    <property type="molecule type" value="Genomic_DNA"/>
</dbReference>
<dbReference type="EMBL" id="AC006526">
    <property type="protein sequence ID" value="AAM15265.1"/>
    <property type="molecule type" value="Genomic_DNA"/>
</dbReference>
<dbReference type="EMBL" id="CP002685">
    <property type="protein sequence ID" value="AEC10712.1"/>
    <property type="molecule type" value="Genomic_DNA"/>
</dbReference>
<dbReference type="EMBL" id="AY094399">
    <property type="protein sequence ID" value="AAM19778.1"/>
    <property type="molecule type" value="mRNA"/>
</dbReference>
<dbReference type="PIR" id="G84903">
    <property type="entry name" value="G84903"/>
</dbReference>
<dbReference type="RefSeq" id="NP_566078.1">
    <property type="nucleotide sequence ID" value="NM_130216.3"/>
</dbReference>
<dbReference type="SMR" id="Q9ZPY8"/>
<dbReference type="BioGRID" id="4597">
    <property type="interactions" value="11"/>
</dbReference>
<dbReference type="FunCoup" id="Q9ZPY8">
    <property type="interactions" value="16"/>
</dbReference>
<dbReference type="STRING" id="3702.Q9ZPY8"/>
<dbReference type="PaxDb" id="3702-AT2G46510.1"/>
<dbReference type="ProteomicsDB" id="244944"/>
<dbReference type="EnsemblPlants" id="AT2G46510.1">
    <property type="protein sequence ID" value="AT2G46510.1"/>
    <property type="gene ID" value="AT2G46510"/>
</dbReference>
<dbReference type="GeneID" id="819262"/>
<dbReference type="Gramene" id="AT2G46510.1">
    <property type="protein sequence ID" value="AT2G46510.1"/>
    <property type="gene ID" value="AT2G46510"/>
</dbReference>
<dbReference type="KEGG" id="ath:AT2G46510"/>
<dbReference type="Araport" id="AT2G46510"/>
<dbReference type="TAIR" id="AT2G46510">
    <property type="gene designation" value="AIB"/>
</dbReference>
<dbReference type="eggNOG" id="ENOG502QUFW">
    <property type="taxonomic scope" value="Eukaryota"/>
</dbReference>
<dbReference type="HOGENOM" id="CLU_021132_0_1_1"/>
<dbReference type="InParanoid" id="Q9ZPY8"/>
<dbReference type="OMA" id="GRHAWAT"/>
<dbReference type="OrthoDB" id="677168at2759"/>
<dbReference type="PhylomeDB" id="Q9ZPY8"/>
<dbReference type="PRO" id="PR:Q9ZPY8"/>
<dbReference type="Proteomes" id="UP000006548">
    <property type="component" value="Chromosome 2"/>
</dbReference>
<dbReference type="ExpressionAtlas" id="Q9ZPY8">
    <property type="expression patterns" value="baseline and differential"/>
</dbReference>
<dbReference type="GO" id="GO:0005634">
    <property type="term" value="C:nucleus"/>
    <property type="evidence" value="ECO:0000314"/>
    <property type="project" value="TAIR"/>
</dbReference>
<dbReference type="GO" id="GO:0003700">
    <property type="term" value="F:DNA-binding transcription factor activity"/>
    <property type="evidence" value="ECO:0000314"/>
    <property type="project" value="TAIR"/>
</dbReference>
<dbReference type="GO" id="GO:0046983">
    <property type="term" value="F:protein dimerization activity"/>
    <property type="evidence" value="ECO:0007669"/>
    <property type="project" value="InterPro"/>
</dbReference>
<dbReference type="GO" id="GO:0000976">
    <property type="term" value="F:transcription cis-regulatory region binding"/>
    <property type="evidence" value="ECO:0000353"/>
    <property type="project" value="TAIR"/>
</dbReference>
<dbReference type="GO" id="GO:0009738">
    <property type="term" value="P:abscisic acid-activated signaling pathway"/>
    <property type="evidence" value="ECO:0007669"/>
    <property type="project" value="UniProtKB-KW"/>
</dbReference>
<dbReference type="GO" id="GO:0010629">
    <property type="term" value="P:negative regulation of gene expression"/>
    <property type="evidence" value="ECO:0000316"/>
    <property type="project" value="TAIR"/>
</dbReference>
<dbReference type="GO" id="GO:0006355">
    <property type="term" value="P:regulation of DNA-templated transcription"/>
    <property type="evidence" value="ECO:0000304"/>
    <property type="project" value="TAIR"/>
</dbReference>
<dbReference type="GO" id="GO:0009737">
    <property type="term" value="P:response to abscisic acid"/>
    <property type="evidence" value="ECO:0000315"/>
    <property type="project" value="TAIR"/>
</dbReference>
<dbReference type="GO" id="GO:0009611">
    <property type="term" value="P:response to wounding"/>
    <property type="evidence" value="ECO:0000270"/>
    <property type="project" value="TAIR"/>
</dbReference>
<dbReference type="CDD" id="cd11449">
    <property type="entry name" value="bHLH_AtAIB_like"/>
    <property type="match status" value="1"/>
</dbReference>
<dbReference type="FunFam" id="4.10.280.10:FF:000078">
    <property type="entry name" value="Transcription factor bHLH13"/>
    <property type="match status" value="1"/>
</dbReference>
<dbReference type="Gene3D" id="4.10.280.10">
    <property type="entry name" value="Helix-loop-helix DNA-binding domain"/>
    <property type="match status" value="1"/>
</dbReference>
<dbReference type="InterPro" id="IPR045084">
    <property type="entry name" value="AIB/MYC-like"/>
</dbReference>
<dbReference type="InterPro" id="IPR011598">
    <property type="entry name" value="bHLH_dom"/>
</dbReference>
<dbReference type="InterPro" id="IPR036638">
    <property type="entry name" value="HLH_DNA-bd_sf"/>
</dbReference>
<dbReference type="InterPro" id="IPR025610">
    <property type="entry name" value="MYC/MYB_N"/>
</dbReference>
<dbReference type="PANTHER" id="PTHR11514">
    <property type="entry name" value="MYC"/>
    <property type="match status" value="1"/>
</dbReference>
<dbReference type="PANTHER" id="PTHR11514:SF119">
    <property type="entry name" value="TRANSCRIPTION FACTOR ABA-INDUCIBLE BHLH-TYPE"/>
    <property type="match status" value="1"/>
</dbReference>
<dbReference type="Pfam" id="PF14215">
    <property type="entry name" value="bHLH-MYC_N"/>
    <property type="match status" value="1"/>
</dbReference>
<dbReference type="Pfam" id="PF00010">
    <property type="entry name" value="HLH"/>
    <property type="match status" value="1"/>
</dbReference>
<dbReference type="SMART" id="SM00353">
    <property type="entry name" value="HLH"/>
    <property type="match status" value="1"/>
</dbReference>
<dbReference type="SUPFAM" id="SSF47459">
    <property type="entry name" value="HLH, helix-loop-helix DNA-binding domain"/>
    <property type="match status" value="1"/>
</dbReference>
<dbReference type="PROSITE" id="PS50888">
    <property type="entry name" value="BHLH"/>
    <property type="match status" value="1"/>
</dbReference>
<evidence type="ECO:0000255" key="1">
    <source>
        <dbReference type="PROSITE-ProRule" id="PRU00981"/>
    </source>
</evidence>
<evidence type="ECO:0000256" key="2">
    <source>
        <dbReference type="SAM" id="MobiDB-lite"/>
    </source>
</evidence>
<evidence type="ECO:0000269" key="3">
    <source>
    </source>
</evidence>
<evidence type="ECO:0000305" key="4"/>